<proteinExistence type="inferred from homology"/>
<reference key="1">
    <citation type="journal article" date="2007" name="PLoS ONE">
        <title>Paradoxical DNA repair and peroxide resistance gene conservation in Bacillus pumilus SAFR-032.</title>
        <authorList>
            <person name="Gioia J."/>
            <person name="Yerrapragada S."/>
            <person name="Qin X."/>
            <person name="Jiang H."/>
            <person name="Igboeli O.C."/>
            <person name="Muzny D."/>
            <person name="Dugan-Rocha S."/>
            <person name="Ding Y."/>
            <person name="Hawes A."/>
            <person name="Liu W."/>
            <person name="Perez L."/>
            <person name="Kovar C."/>
            <person name="Dinh H."/>
            <person name="Lee S."/>
            <person name="Nazareth L."/>
            <person name="Blyth P."/>
            <person name="Holder M."/>
            <person name="Buhay C."/>
            <person name="Tirumalai M.R."/>
            <person name="Liu Y."/>
            <person name="Dasgupta I."/>
            <person name="Bokhetache L."/>
            <person name="Fujita M."/>
            <person name="Karouia F."/>
            <person name="Eswara Moorthy P."/>
            <person name="Siefert J."/>
            <person name="Uzman A."/>
            <person name="Buzumbo P."/>
            <person name="Verma A."/>
            <person name="Zwiya H."/>
            <person name="McWilliams B.D."/>
            <person name="Olowu A."/>
            <person name="Clinkenbeard K.D."/>
            <person name="Newcombe D."/>
            <person name="Golebiewski L."/>
            <person name="Petrosino J.F."/>
            <person name="Nicholson W.L."/>
            <person name="Fox G.E."/>
            <person name="Venkateswaran K."/>
            <person name="Highlander S.K."/>
            <person name="Weinstock G.M."/>
        </authorList>
    </citation>
    <scope>NUCLEOTIDE SEQUENCE [LARGE SCALE GENOMIC DNA]</scope>
    <source>
        <strain>SAFR-032</strain>
    </source>
</reference>
<dbReference type="EC" id="3.6.4.-" evidence="1"/>
<dbReference type="EMBL" id="CP000813">
    <property type="protein sequence ID" value="ABV63079.1"/>
    <property type="molecule type" value="Genomic_DNA"/>
</dbReference>
<dbReference type="RefSeq" id="WP_012010742.1">
    <property type="nucleotide sequence ID" value="NZ_VEIS01000010.1"/>
</dbReference>
<dbReference type="SMR" id="A8FFR2"/>
<dbReference type="STRING" id="315750.BPUM_2415"/>
<dbReference type="GeneID" id="5621679"/>
<dbReference type="KEGG" id="bpu:BPUM_2415"/>
<dbReference type="eggNOG" id="COG2255">
    <property type="taxonomic scope" value="Bacteria"/>
</dbReference>
<dbReference type="HOGENOM" id="CLU_055599_1_0_9"/>
<dbReference type="OrthoDB" id="9804478at2"/>
<dbReference type="Proteomes" id="UP000001355">
    <property type="component" value="Chromosome"/>
</dbReference>
<dbReference type="GO" id="GO:0005737">
    <property type="term" value="C:cytoplasm"/>
    <property type="evidence" value="ECO:0007669"/>
    <property type="project" value="UniProtKB-SubCell"/>
</dbReference>
<dbReference type="GO" id="GO:0048476">
    <property type="term" value="C:Holliday junction resolvase complex"/>
    <property type="evidence" value="ECO:0007669"/>
    <property type="project" value="UniProtKB-UniRule"/>
</dbReference>
<dbReference type="GO" id="GO:0005524">
    <property type="term" value="F:ATP binding"/>
    <property type="evidence" value="ECO:0007669"/>
    <property type="project" value="UniProtKB-UniRule"/>
</dbReference>
<dbReference type="GO" id="GO:0016887">
    <property type="term" value="F:ATP hydrolysis activity"/>
    <property type="evidence" value="ECO:0007669"/>
    <property type="project" value="InterPro"/>
</dbReference>
<dbReference type="GO" id="GO:0000400">
    <property type="term" value="F:four-way junction DNA binding"/>
    <property type="evidence" value="ECO:0007669"/>
    <property type="project" value="UniProtKB-UniRule"/>
</dbReference>
<dbReference type="GO" id="GO:0009378">
    <property type="term" value="F:four-way junction helicase activity"/>
    <property type="evidence" value="ECO:0007669"/>
    <property type="project" value="InterPro"/>
</dbReference>
<dbReference type="GO" id="GO:0006310">
    <property type="term" value="P:DNA recombination"/>
    <property type="evidence" value="ECO:0007669"/>
    <property type="project" value="UniProtKB-UniRule"/>
</dbReference>
<dbReference type="GO" id="GO:0006281">
    <property type="term" value="P:DNA repair"/>
    <property type="evidence" value="ECO:0007669"/>
    <property type="project" value="UniProtKB-UniRule"/>
</dbReference>
<dbReference type="CDD" id="cd00009">
    <property type="entry name" value="AAA"/>
    <property type="match status" value="1"/>
</dbReference>
<dbReference type="Gene3D" id="1.10.8.60">
    <property type="match status" value="1"/>
</dbReference>
<dbReference type="Gene3D" id="3.40.50.300">
    <property type="entry name" value="P-loop containing nucleotide triphosphate hydrolases"/>
    <property type="match status" value="1"/>
</dbReference>
<dbReference type="Gene3D" id="1.10.10.10">
    <property type="entry name" value="Winged helix-like DNA-binding domain superfamily/Winged helix DNA-binding domain"/>
    <property type="match status" value="1"/>
</dbReference>
<dbReference type="HAMAP" id="MF_00016">
    <property type="entry name" value="DNA_HJ_migration_RuvB"/>
    <property type="match status" value="1"/>
</dbReference>
<dbReference type="InterPro" id="IPR003593">
    <property type="entry name" value="AAA+_ATPase"/>
</dbReference>
<dbReference type="InterPro" id="IPR041445">
    <property type="entry name" value="AAA_lid_4"/>
</dbReference>
<dbReference type="InterPro" id="IPR004605">
    <property type="entry name" value="DNA_helicase_Holl-junc_RuvB"/>
</dbReference>
<dbReference type="InterPro" id="IPR027417">
    <property type="entry name" value="P-loop_NTPase"/>
</dbReference>
<dbReference type="InterPro" id="IPR008824">
    <property type="entry name" value="RuvB-like_N"/>
</dbReference>
<dbReference type="InterPro" id="IPR008823">
    <property type="entry name" value="RuvB_C"/>
</dbReference>
<dbReference type="InterPro" id="IPR036388">
    <property type="entry name" value="WH-like_DNA-bd_sf"/>
</dbReference>
<dbReference type="InterPro" id="IPR036390">
    <property type="entry name" value="WH_DNA-bd_sf"/>
</dbReference>
<dbReference type="NCBIfam" id="NF000868">
    <property type="entry name" value="PRK00080.1"/>
    <property type="match status" value="1"/>
</dbReference>
<dbReference type="NCBIfam" id="TIGR00635">
    <property type="entry name" value="ruvB"/>
    <property type="match status" value="1"/>
</dbReference>
<dbReference type="PANTHER" id="PTHR42848">
    <property type="match status" value="1"/>
</dbReference>
<dbReference type="PANTHER" id="PTHR42848:SF1">
    <property type="entry name" value="HOLLIDAY JUNCTION BRANCH MIGRATION COMPLEX SUBUNIT RUVB"/>
    <property type="match status" value="1"/>
</dbReference>
<dbReference type="Pfam" id="PF17864">
    <property type="entry name" value="AAA_lid_4"/>
    <property type="match status" value="1"/>
</dbReference>
<dbReference type="Pfam" id="PF05491">
    <property type="entry name" value="RuvB_C"/>
    <property type="match status" value="1"/>
</dbReference>
<dbReference type="Pfam" id="PF05496">
    <property type="entry name" value="RuvB_N"/>
    <property type="match status" value="1"/>
</dbReference>
<dbReference type="SMART" id="SM00382">
    <property type="entry name" value="AAA"/>
    <property type="match status" value="1"/>
</dbReference>
<dbReference type="SUPFAM" id="SSF52540">
    <property type="entry name" value="P-loop containing nucleoside triphosphate hydrolases"/>
    <property type="match status" value="1"/>
</dbReference>
<dbReference type="SUPFAM" id="SSF46785">
    <property type="entry name" value="Winged helix' DNA-binding domain"/>
    <property type="match status" value="1"/>
</dbReference>
<accession>A8FFR2</accession>
<feature type="chain" id="PRO_1000057139" description="Holliday junction branch migration complex subunit RuvB">
    <location>
        <begin position="1"/>
        <end position="334"/>
    </location>
</feature>
<feature type="region of interest" description="Large ATPase domain (RuvB-L)" evidence="1">
    <location>
        <begin position="1"/>
        <end position="182"/>
    </location>
</feature>
<feature type="region of interest" description="Small ATPAse domain (RuvB-S)" evidence="1">
    <location>
        <begin position="183"/>
        <end position="253"/>
    </location>
</feature>
<feature type="region of interest" description="Head domain (RuvB-H)" evidence="1">
    <location>
        <begin position="256"/>
        <end position="334"/>
    </location>
</feature>
<feature type="binding site" evidence="1">
    <location>
        <position position="21"/>
    </location>
    <ligand>
        <name>ATP</name>
        <dbReference type="ChEBI" id="CHEBI:30616"/>
    </ligand>
</feature>
<feature type="binding site" evidence="1">
    <location>
        <position position="22"/>
    </location>
    <ligand>
        <name>ATP</name>
        <dbReference type="ChEBI" id="CHEBI:30616"/>
    </ligand>
</feature>
<feature type="binding site" evidence="1">
    <location>
        <position position="63"/>
    </location>
    <ligand>
        <name>ATP</name>
        <dbReference type="ChEBI" id="CHEBI:30616"/>
    </ligand>
</feature>
<feature type="binding site" evidence="1">
    <location>
        <position position="66"/>
    </location>
    <ligand>
        <name>ATP</name>
        <dbReference type="ChEBI" id="CHEBI:30616"/>
    </ligand>
</feature>
<feature type="binding site" evidence="1">
    <location>
        <position position="67"/>
    </location>
    <ligand>
        <name>ATP</name>
        <dbReference type="ChEBI" id="CHEBI:30616"/>
    </ligand>
</feature>
<feature type="binding site" evidence="1">
    <location>
        <position position="67"/>
    </location>
    <ligand>
        <name>Mg(2+)</name>
        <dbReference type="ChEBI" id="CHEBI:18420"/>
    </ligand>
</feature>
<feature type="binding site" evidence="1">
    <location>
        <position position="68"/>
    </location>
    <ligand>
        <name>ATP</name>
        <dbReference type="ChEBI" id="CHEBI:30616"/>
    </ligand>
</feature>
<feature type="binding site" evidence="1">
    <location>
        <begin position="129"/>
        <end position="131"/>
    </location>
    <ligand>
        <name>ATP</name>
        <dbReference type="ChEBI" id="CHEBI:30616"/>
    </ligand>
</feature>
<feature type="binding site" evidence="1">
    <location>
        <position position="172"/>
    </location>
    <ligand>
        <name>ATP</name>
        <dbReference type="ChEBI" id="CHEBI:30616"/>
    </ligand>
</feature>
<feature type="binding site" evidence="1">
    <location>
        <position position="182"/>
    </location>
    <ligand>
        <name>ATP</name>
        <dbReference type="ChEBI" id="CHEBI:30616"/>
    </ligand>
</feature>
<feature type="binding site" evidence="1">
    <location>
        <position position="219"/>
    </location>
    <ligand>
        <name>ATP</name>
        <dbReference type="ChEBI" id="CHEBI:30616"/>
    </ligand>
</feature>
<feature type="binding site" evidence="1">
    <location>
        <position position="311"/>
    </location>
    <ligand>
        <name>DNA</name>
        <dbReference type="ChEBI" id="CHEBI:16991"/>
    </ligand>
</feature>
<feature type="binding site" evidence="1">
    <location>
        <position position="316"/>
    </location>
    <ligand>
        <name>DNA</name>
        <dbReference type="ChEBI" id="CHEBI:16991"/>
    </ligand>
</feature>
<comment type="function">
    <text evidence="1">The RuvA-RuvB-RuvC complex processes Holliday junction (HJ) DNA during genetic recombination and DNA repair, while the RuvA-RuvB complex plays an important role in the rescue of blocked DNA replication forks via replication fork reversal (RFR). RuvA specifically binds to HJ cruciform DNA, conferring on it an open structure. The RuvB hexamer acts as an ATP-dependent pump, pulling dsDNA into and through the RuvAB complex. RuvB forms 2 homohexamers on either side of HJ DNA bound by 1 or 2 RuvA tetramers; 4 subunits per hexamer contact DNA at a time. Coordinated motions by a converter formed by DNA-disengaged RuvB subunits stimulates ATP hydrolysis and nucleotide exchange. Immobilization of the converter enables RuvB to convert the ATP-contained energy into a lever motion, pulling 2 nucleotides of DNA out of the RuvA tetramer per ATP hydrolyzed, thus driving DNA branch migration. The RuvB motors rotate together with the DNA substrate, which together with the progressing nucleotide cycle form the mechanistic basis for DNA recombination by continuous HJ branch migration. Branch migration allows RuvC to scan DNA until it finds its consensus sequence, where it cleaves and resolves cruciform DNA.</text>
</comment>
<comment type="catalytic activity">
    <reaction evidence="1">
        <text>ATP + H2O = ADP + phosphate + H(+)</text>
        <dbReference type="Rhea" id="RHEA:13065"/>
        <dbReference type="ChEBI" id="CHEBI:15377"/>
        <dbReference type="ChEBI" id="CHEBI:15378"/>
        <dbReference type="ChEBI" id="CHEBI:30616"/>
        <dbReference type="ChEBI" id="CHEBI:43474"/>
        <dbReference type="ChEBI" id="CHEBI:456216"/>
    </reaction>
</comment>
<comment type="subunit">
    <text evidence="1">Homohexamer. Forms an RuvA(8)-RuvB(12)-Holliday junction (HJ) complex. HJ DNA is sandwiched between 2 RuvA tetramers; dsDNA enters through RuvA and exits via RuvB. An RuvB hexamer assembles on each DNA strand where it exits the tetramer. Each RuvB hexamer is contacted by two RuvA subunits (via domain III) on 2 adjacent RuvB subunits; this complex drives branch migration. In the full resolvosome a probable DNA-RuvA(4)-RuvB(12)-RuvC(2) complex forms which resolves the HJ.</text>
</comment>
<comment type="subcellular location">
    <subcellularLocation>
        <location evidence="1">Cytoplasm</location>
    </subcellularLocation>
</comment>
<comment type="domain">
    <text evidence="1">Has 3 domains, the large (RuvB-L) and small ATPase (RuvB-S) domains and the C-terminal head (RuvB-H) domain. The head domain binds DNA, while the ATPase domains jointly bind ATP, ADP or are empty depending on the state of the subunit in the translocation cycle. During a single DNA translocation step the structure of each domain remains the same, but their relative positions change.</text>
</comment>
<comment type="similarity">
    <text evidence="1">Belongs to the RuvB family.</text>
</comment>
<evidence type="ECO:0000255" key="1">
    <source>
        <dbReference type="HAMAP-Rule" id="MF_00016"/>
    </source>
</evidence>
<name>RUVB_BACP2</name>
<sequence>MDERLVSTEADNHESAIEQSLRPQTLSQYIGQQKVKDNLSVFIEAARMRQETLDHVLLYGPPGLGKTTLASIIANEMNVQLRTTSGPAIERPGDLAAILTSLEPGDVLFIDEIHRLQRSIEEVLYPAMEDFCLDIVIGKGDTARSVRLDLPPFTLVGATTRVGLLTAPLRDRFGVHARLEYYEQRDLAHIVSRTAELFEIGIDLRSAEEIARRSRGTPRVANRLLRRVRDFAQVLGNHSITEDIAEDALERLQVDKLGLDHIDHKLLLSMIEKFRGGPVGLDTISATIGEESHTIEDVYEPYLLQIGFLQRTPRGRVVTREAYEHFQMEVPIRD</sequence>
<gene>
    <name evidence="1" type="primary">ruvB</name>
    <name type="ordered locus">BPUM_2415</name>
</gene>
<keyword id="KW-0067">ATP-binding</keyword>
<keyword id="KW-0963">Cytoplasm</keyword>
<keyword id="KW-0227">DNA damage</keyword>
<keyword id="KW-0233">DNA recombination</keyword>
<keyword id="KW-0234">DNA repair</keyword>
<keyword id="KW-0238">DNA-binding</keyword>
<keyword id="KW-0378">Hydrolase</keyword>
<keyword id="KW-0547">Nucleotide-binding</keyword>
<protein>
    <recommendedName>
        <fullName evidence="1">Holliday junction branch migration complex subunit RuvB</fullName>
        <ecNumber evidence="1">3.6.4.-</ecNumber>
    </recommendedName>
</protein>
<organism>
    <name type="scientific">Bacillus pumilus (strain SAFR-032)</name>
    <dbReference type="NCBI Taxonomy" id="315750"/>
    <lineage>
        <taxon>Bacteria</taxon>
        <taxon>Bacillati</taxon>
        <taxon>Bacillota</taxon>
        <taxon>Bacilli</taxon>
        <taxon>Bacillales</taxon>
        <taxon>Bacillaceae</taxon>
        <taxon>Bacillus</taxon>
    </lineage>
</organism>